<name>Y4323_PSEFS</name>
<evidence type="ECO:0000255" key="1">
    <source>
        <dbReference type="HAMAP-Rule" id="MF_00690"/>
    </source>
</evidence>
<comment type="similarity">
    <text evidence="1">Belongs to the UPF0270 family.</text>
</comment>
<sequence length="75" mass="8584">MLIPYDALEVDTLTRLIEDFVTRDGTDNGDDTPLETRVLRVRQALTKGQALIVFDPDSEQCQLMLKHDVPKHLFD</sequence>
<protein>
    <recommendedName>
        <fullName evidence="1">UPF0270 protein PFLU_4323</fullName>
    </recommendedName>
</protein>
<dbReference type="EMBL" id="AM181176">
    <property type="protein sequence ID" value="CAY50921.1"/>
    <property type="molecule type" value="Genomic_DNA"/>
</dbReference>
<dbReference type="RefSeq" id="WP_003236706.1">
    <property type="nucleotide sequence ID" value="NC_012660.1"/>
</dbReference>
<dbReference type="SMR" id="C3K071"/>
<dbReference type="STRING" id="294.SRM1_04049"/>
<dbReference type="eggNOG" id="COG3089">
    <property type="taxonomic scope" value="Bacteria"/>
</dbReference>
<dbReference type="HOGENOM" id="CLU_186759_2_0_6"/>
<dbReference type="OrthoDB" id="6120729at2"/>
<dbReference type="Gene3D" id="1.10.10.610">
    <property type="entry name" value="YehU-like"/>
    <property type="match status" value="1"/>
</dbReference>
<dbReference type="HAMAP" id="MF_00690">
    <property type="entry name" value="UPF0270"/>
    <property type="match status" value="1"/>
</dbReference>
<dbReference type="InterPro" id="IPR010648">
    <property type="entry name" value="UPF0270"/>
</dbReference>
<dbReference type="InterPro" id="IPR036685">
    <property type="entry name" value="YehU-like_sf"/>
</dbReference>
<dbReference type="NCBIfam" id="NF001441">
    <property type="entry name" value="PRK00304.1"/>
    <property type="match status" value="1"/>
</dbReference>
<dbReference type="Pfam" id="PF06794">
    <property type="entry name" value="UPF0270"/>
    <property type="match status" value="1"/>
</dbReference>
<dbReference type="PIRSF" id="PIRSF006169">
    <property type="entry name" value="UCP006169"/>
    <property type="match status" value="1"/>
</dbReference>
<dbReference type="SUPFAM" id="SSF118001">
    <property type="entry name" value="YehU-like"/>
    <property type="match status" value="1"/>
</dbReference>
<reference key="1">
    <citation type="journal article" date="2009" name="Genome Biol.">
        <title>Genomic and genetic analyses of diversity and plant interactions of Pseudomonas fluorescens.</title>
        <authorList>
            <person name="Silby M.W."/>
            <person name="Cerdeno-Tarraga A.M."/>
            <person name="Vernikos G.S."/>
            <person name="Giddens S.R."/>
            <person name="Jackson R.W."/>
            <person name="Preston G.M."/>
            <person name="Zhang X.-X."/>
            <person name="Moon C.D."/>
            <person name="Gehrig S.M."/>
            <person name="Godfrey S.A.C."/>
            <person name="Knight C.G."/>
            <person name="Malone J.G."/>
            <person name="Robinson Z."/>
            <person name="Spiers A.J."/>
            <person name="Harris S."/>
            <person name="Challis G.L."/>
            <person name="Yaxley A.M."/>
            <person name="Harris D."/>
            <person name="Seeger K."/>
            <person name="Murphy L."/>
            <person name="Rutter S."/>
            <person name="Squares R."/>
            <person name="Quail M.A."/>
            <person name="Saunders E."/>
            <person name="Mavromatis K."/>
            <person name="Brettin T.S."/>
            <person name="Bentley S.D."/>
            <person name="Hothersall J."/>
            <person name="Stephens E."/>
            <person name="Thomas C.M."/>
            <person name="Parkhill J."/>
            <person name="Levy S.B."/>
            <person name="Rainey P.B."/>
            <person name="Thomson N.R."/>
        </authorList>
    </citation>
    <scope>NUCLEOTIDE SEQUENCE [LARGE SCALE GENOMIC DNA]</scope>
    <source>
        <strain>SBW25</strain>
    </source>
</reference>
<proteinExistence type="inferred from homology"/>
<gene>
    <name type="ordered locus">PFLU_4323</name>
</gene>
<accession>C3K071</accession>
<feature type="chain" id="PRO_1000212582" description="UPF0270 protein PFLU_4323">
    <location>
        <begin position="1"/>
        <end position="75"/>
    </location>
</feature>
<organism>
    <name type="scientific">Pseudomonas fluorescens (strain SBW25)</name>
    <dbReference type="NCBI Taxonomy" id="216595"/>
    <lineage>
        <taxon>Bacteria</taxon>
        <taxon>Pseudomonadati</taxon>
        <taxon>Pseudomonadota</taxon>
        <taxon>Gammaproteobacteria</taxon>
        <taxon>Pseudomonadales</taxon>
        <taxon>Pseudomonadaceae</taxon>
        <taxon>Pseudomonas</taxon>
    </lineage>
</organism>